<proteinExistence type="inferred from homology"/>
<evidence type="ECO:0000250" key="1"/>
<evidence type="ECO:0000255" key="2"/>
<evidence type="ECO:0000305" key="3"/>
<reference key="1">
    <citation type="journal article" date="1985" name="J. Mol. Biol.">
        <title>Nucleotide sequence and genetic organization of the genome of the N-specific filamentous bacteriophage IKe. Comparison with the genome of the F-specific filamentous phages M13, fd and f1.</title>
        <authorList>
            <person name="Peeters B.P.H."/>
            <person name="Peters R.M."/>
            <person name="Schoenmakers J.G.G."/>
            <person name="Konings R.N.H."/>
        </authorList>
    </citation>
    <scope>NUCLEOTIDE SEQUENCE [GENOMIC DNA]</scope>
</reference>
<accession>P03658</accession>
<feature type="chain" id="PRO_0000098205" description="Gene 1 protein">
    <location>
        <begin position="1"/>
        <end position="365"/>
    </location>
</feature>
<feature type="transmembrane region" description="Helical" evidence="2">
    <location>
        <begin position="255"/>
        <end position="272"/>
    </location>
</feature>
<feature type="binding site" evidence="2">
    <location>
        <begin position="8"/>
        <end position="15"/>
    </location>
    <ligand>
        <name>ATP</name>
        <dbReference type="ChEBI" id="CHEBI:30616"/>
    </ligand>
</feature>
<feature type="splice variant" id="VSP_037573" description="In isoform G11P." evidence="3">
    <location>
        <begin position="1"/>
        <end position="241"/>
    </location>
</feature>
<keyword id="KW-0024">Alternative initiation</keyword>
<keyword id="KW-0067">ATP-binding</keyword>
<keyword id="KW-1043">Host membrane</keyword>
<keyword id="KW-0472">Membrane</keyword>
<keyword id="KW-0547">Nucleotide-binding</keyword>
<keyword id="KW-1185">Reference proteome</keyword>
<keyword id="KW-0812">Transmembrane</keyword>
<keyword id="KW-1133">Transmembrane helix</keyword>
<keyword id="KW-1249">Viral extrusion</keyword>
<keyword id="KW-1188">Viral release from host cell</keyword>
<dbReference type="EMBL" id="X02139">
    <property type="protein sequence ID" value="CAA26075.1"/>
    <property type="molecule type" value="Genomic_DNA"/>
</dbReference>
<dbReference type="PIR" id="A04263">
    <property type="entry name" value="Z1BPIK"/>
</dbReference>
<dbReference type="RefSeq" id="NP_040578.1">
    <molecule id="P03658-1"/>
    <property type="nucleotide sequence ID" value="NC_002014.1"/>
</dbReference>
<dbReference type="GeneID" id="1260889"/>
<dbReference type="KEGG" id="vg:1260889"/>
<dbReference type="OrthoDB" id="9125at10239"/>
<dbReference type="Proteomes" id="UP000000372">
    <property type="component" value="Genome"/>
</dbReference>
<dbReference type="GO" id="GO:0033644">
    <property type="term" value="C:host cell membrane"/>
    <property type="evidence" value="ECO:0007669"/>
    <property type="project" value="UniProtKB-SubCell"/>
</dbReference>
<dbReference type="GO" id="GO:0016020">
    <property type="term" value="C:membrane"/>
    <property type="evidence" value="ECO:0007669"/>
    <property type="project" value="UniProtKB-KW"/>
</dbReference>
<dbReference type="GO" id="GO:0005524">
    <property type="term" value="F:ATP binding"/>
    <property type="evidence" value="ECO:0007669"/>
    <property type="project" value="UniProtKB-KW"/>
</dbReference>
<dbReference type="GO" id="GO:0099045">
    <property type="term" value="P:viral extrusion"/>
    <property type="evidence" value="ECO:0007669"/>
    <property type="project" value="UniProtKB-KW"/>
</dbReference>
<dbReference type="Gene3D" id="3.40.50.300">
    <property type="entry name" value="P-loop containing nucleotide triphosphate hydrolases"/>
    <property type="match status" value="1"/>
</dbReference>
<dbReference type="InterPro" id="IPR027417">
    <property type="entry name" value="P-loop_NTPase"/>
</dbReference>
<dbReference type="InterPro" id="IPR008900">
    <property type="entry name" value="Zot_N"/>
</dbReference>
<dbReference type="Pfam" id="PF05707">
    <property type="entry name" value="Zot"/>
    <property type="match status" value="1"/>
</dbReference>
<dbReference type="SUPFAM" id="SSF52540">
    <property type="entry name" value="P-loop containing nucleoside triphosphate hydrolases"/>
    <property type="match status" value="1"/>
</dbReference>
<organism>
    <name type="scientific">Salmonella phage IKe</name>
    <name type="common">Bacteriophage IKe</name>
    <dbReference type="NCBI Taxonomy" id="10867"/>
    <lineage>
        <taxon>Viruses</taxon>
        <taxon>Monodnaviria</taxon>
        <taxon>Loebvirae</taxon>
        <taxon>Hofneiviricota</taxon>
        <taxon>Faserviricetes</taxon>
        <taxon>Tubulavirales</taxon>
        <taxon>Inoviridae</taxon>
        <taxon>Lineavirus</taxon>
        <taxon>Lineavirus IKe</taxon>
    </lineage>
</organism>
<comment type="function">
    <text evidence="1">Isoform G1P plays an essential role in phage assembly. It is required to increase the number of adhesion zones between the inner and outer membranes of the host cell. The extrusion of neo-synthesized phages occurs at these adhesion sites. May be involved with G4P in creating zone through which the phage assembled and extruded (By similarity).</text>
</comment>
<comment type="function">
    <text evidence="1">Isoform G11P is also involved in phage assembly, probably playing a structural role in the formation of the phage assembly site.</text>
</comment>
<comment type="subunit">
    <text evidence="1">Interacts with G4P; this interaction results in a complex that spans the inner an outer host membranes.</text>
</comment>
<comment type="subcellular location">
    <subcellularLocation>
        <location evidence="3">Host membrane</location>
        <topology evidence="3">Single-pass membrane protein</topology>
    </subcellularLocation>
</comment>
<comment type="alternative products">
    <event type="alternative initiation"/>
    <isoform>
        <id>P03658-1</id>
        <name>G1P</name>
        <name>Gene 1 protein</name>
        <sequence type="displayed"/>
    </isoform>
    <isoform>
        <id>P03658-2</id>
        <name>G11P</name>
        <name>Gene 11 protein</name>
        <sequence type="described" ref="VSP_037573"/>
    </isoform>
</comment>
<comment type="similarity">
    <text evidence="3">Belongs to the inovirus G1P protein family.</text>
</comment>
<protein>
    <recommendedName>
        <fullName>Gene 1 protein</fullName>
    </recommendedName>
    <alternativeName>
        <fullName>G1P</fullName>
    </alternativeName>
</protein>
<name>G1P_BPIKE</name>
<sequence>MAVYVVTGKLGAGKTLVAVSRIQRTLAKGGIVATNLNLKLHHFPQVGRYAKQCRVMRIADKPTLEDLESIGRGNLTYDESKNGLLVLDECGTWFNSRNWSDKSRQPVIDWCLHARKLGWDIIFIIQDISLMDKQARDALAEHVVYCRRLDKLNIPIIGGLISVLSGGRLPLPKVHFGIVKYGDNPQSLTVDKWVYTGTDLYAAYDTKQIFTSDREISPPYCPLSPYYTHGIFSVKRDAKYYMRMTKIYFKKMNRVFLMASFLALGAACGIFYKSQAYSNQLQHIQDNSKTSVISKTDQSAEILPRLSINSYSQMGYDVSVTFKDAKAKIYNSFDLIKDGYRVDIKDACHVTIVKKSYIQQITCEG</sequence>
<gene>
    <name type="primary">I</name>
</gene>
<organismHost>
    <name type="scientific">Escherichia coli</name>
    <dbReference type="NCBI Taxonomy" id="562"/>
</organismHost>